<organism>
    <name type="scientific">Prochlorococcus marinus (strain AS9601)</name>
    <dbReference type="NCBI Taxonomy" id="146891"/>
    <lineage>
        <taxon>Bacteria</taxon>
        <taxon>Bacillati</taxon>
        <taxon>Cyanobacteriota</taxon>
        <taxon>Cyanophyceae</taxon>
        <taxon>Synechococcales</taxon>
        <taxon>Prochlorococcaceae</taxon>
        <taxon>Prochlorococcus</taxon>
    </lineage>
</organism>
<comment type="function">
    <text evidence="1">Condenses 4-methyl-5-(beta-hydroxyethyl)thiazole monophosphate (THZ-P) and 2-methyl-4-amino-5-hydroxymethyl pyrimidine pyrophosphate (HMP-PP) to form thiamine monophosphate (TMP).</text>
</comment>
<comment type="catalytic activity">
    <reaction evidence="1">
        <text>2-[(2R,5Z)-2-carboxy-4-methylthiazol-5(2H)-ylidene]ethyl phosphate + 4-amino-2-methyl-5-(diphosphooxymethyl)pyrimidine + 2 H(+) = thiamine phosphate + CO2 + diphosphate</text>
        <dbReference type="Rhea" id="RHEA:47844"/>
        <dbReference type="ChEBI" id="CHEBI:15378"/>
        <dbReference type="ChEBI" id="CHEBI:16526"/>
        <dbReference type="ChEBI" id="CHEBI:33019"/>
        <dbReference type="ChEBI" id="CHEBI:37575"/>
        <dbReference type="ChEBI" id="CHEBI:57841"/>
        <dbReference type="ChEBI" id="CHEBI:62899"/>
        <dbReference type="EC" id="2.5.1.3"/>
    </reaction>
</comment>
<comment type="catalytic activity">
    <reaction evidence="1">
        <text>2-(2-carboxy-4-methylthiazol-5-yl)ethyl phosphate + 4-amino-2-methyl-5-(diphosphooxymethyl)pyrimidine + 2 H(+) = thiamine phosphate + CO2 + diphosphate</text>
        <dbReference type="Rhea" id="RHEA:47848"/>
        <dbReference type="ChEBI" id="CHEBI:15378"/>
        <dbReference type="ChEBI" id="CHEBI:16526"/>
        <dbReference type="ChEBI" id="CHEBI:33019"/>
        <dbReference type="ChEBI" id="CHEBI:37575"/>
        <dbReference type="ChEBI" id="CHEBI:57841"/>
        <dbReference type="ChEBI" id="CHEBI:62890"/>
        <dbReference type="EC" id="2.5.1.3"/>
    </reaction>
</comment>
<comment type="catalytic activity">
    <reaction evidence="1">
        <text>4-methyl-5-(2-phosphooxyethyl)-thiazole + 4-amino-2-methyl-5-(diphosphooxymethyl)pyrimidine + H(+) = thiamine phosphate + diphosphate</text>
        <dbReference type="Rhea" id="RHEA:22328"/>
        <dbReference type="ChEBI" id="CHEBI:15378"/>
        <dbReference type="ChEBI" id="CHEBI:33019"/>
        <dbReference type="ChEBI" id="CHEBI:37575"/>
        <dbReference type="ChEBI" id="CHEBI:57841"/>
        <dbReference type="ChEBI" id="CHEBI:58296"/>
        <dbReference type="EC" id="2.5.1.3"/>
    </reaction>
</comment>
<comment type="cofactor">
    <cofactor evidence="1">
        <name>Mg(2+)</name>
        <dbReference type="ChEBI" id="CHEBI:18420"/>
    </cofactor>
    <text evidence="1">Binds 1 Mg(2+) ion per subunit.</text>
</comment>
<comment type="pathway">
    <text evidence="1">Cofactor biosynthesis; thiamine diphosphate biosynthesis; thiamine phosphate from 4-amino-2-methyl-5-diphosphomethylpyrimidine and 4-methyl-5-(2-phosphoethyl)-thiazole: step 1/1.</text>
</comment>
<comment type="similarity">
    <text evidence="1">Belongs to the thiamine-phosphate synthase family.</text>
</comment>
<keyword id="KW-0460">Magnesium</keyword>
<keyword id="KW-0479">Metal-binding</keyword>
<keyword id="KW-0784">Thiamine biosynthesis</keyword>
<keyword id="KW-0808">Transferase</keyword>
<gene>
    <name evidence="1" type="primary">thiE</name>
    <name type="ordered locus">A9601_14731</name>
</gene>
<feature type="chain" id="PRO_0000415380" description="Thiamine-phosphate synthase">
    <location>
        <begin position="1"/>
        <end position="351"/>
    </location>
</feature>
<feature type="region of interest" description="Unknown">
    <location>
        <begin position="1"/>
        <end position="128"/>
    </location>
</feature>
<feature type="region of interest" description="Thiamine-phosphate synthase">
    <location>
        <begin position="129"/>
        <end position="351"/>
    </location>
</feature>
<feature type="binding site" evidence="1">
    <location>
        <begin position="180"/>
        <end position="184"/>
    </location>
    <ligand>
        <name>4-amino-2-methyl-5-(diphosphooxymethyl)pyrimidine</name>
        <dbReference type="ChEBI" id="CHEBI:57841"/>
    </ligand>
</feature>
<feature type="binding site" evidence="1">
    <location>
        <position position="212"/>
    </location>
    <ligand>
        <name>4-amino-2-methyl-5-(diphosphooxymethyl)pyrimidine</name>
        <dbReference type="ChEBI" id="CHEBI:57841"/>
    </ligand>
</feature>
<feature type="binding site" evidence="1">
    <location>
        <position position="213"/>
    </location>
    <ligand>
        <name>Mg(2+)</name>
        <dbReference type="ChEBI" id="CHEBI:18420"/>
    </ligand>
</feature>
<feature type="binding site" evidence="1">
    <location>
        <position position="232"/>
    </location>
    <ligand>
        <name>Mg(2+)</name>
        <dbReference type="ChEBI" id="CHEBI:18420"/>
    </ligand>
</feature>
<feature type="binding site" evidence="1">
    <location>
        <position position="251"/>
    </location>
    <ligand>
        <name>4-amino-2-methyl-5-(diphosphooxymethyl)pyrimidine</name>
        <dbReference type="ChEBI" id="CHEBI:57841"/>
    </ligand>
</feature>
<feature type="binding site" evidence="1">
    <location>
        <begin position="277"/>
        <end position="279"/>
    </location>
    <ligand>
        <name>2-[(2R,5Z)-2-carboxy-4-methylthiazol-5(2H)-ylidene]ethyl phosphate</name>
        <dbReference type="ChEBI" id="CHEBI:62899"/>
    </ligand>
</feature>
<feature type="binding site" evidence="1">
    <location>
        <position position="280"/>
    </location>
    <ligand>
        <name>4-amino-2-methyl-5-(diphosphooxymethyl)pyrimidine</name>
        <dbReference type="ChEBI" id="CHEBI:57841"/>
    </ligand>
</feature>
<feature type="binding site" evidence="1">
    <location>
        <position position="307"/>
    </location>
    <ligand>
        <name>2-[(2R,5Z)-2-carboxy-4-methylthiazol-5(2H)-ylidene]ethyl phosphate</name>
        <dbReference type="ChEBI" id="CHEBI:62899"/>
    </ligand>
</feature>
<accession>A2BSJ5</accession>
<reference key="1">
    <citation type="journal article" date="2007" name="PLoS Genet.">
        <title>Patterns and implications of gene gain and loss in the evolution of Prochlorococcus.</title>
        <authorList>
            <person name="Kettler G.C."/>
            <person name="Martiny A.C."/>
            <person name="Huang K."/>
            <person name="Zucker J."/>
            <person name="Coleman M.L."/>
            <person name="Rodrigue S."/>
            <person name="Chen F."/>
            <person name="Lapidus A."/>
            <person name="Ferriera S."/>
            <person name="Johnson J."/>
            <person name="Steglich C."/>
            <person name="Church G.M."/>
            <person name="Richardson P."/>
            <person name="Chisholm S.W."/>
        </authorList>
    </citation>
    <scope>NUCLEOTIDE SEQUENCE [LARGE SCALE GENOMIC DNA]</scope>
    <source>
        <strain>AS9601</strain>
    </source>
</reference>
<protein>
    <recommendedName>
        <fullName evidence="1">Thiamine-phosphate synthase</fullName>
        <shortName evidence="1">TP synthase</shortName>
        <shortName evidence="1">TPS</shortName>
        <ecNumber evidence="1">2.5.1.3</ecNumber>
    </recommendedName>
    <alternativeName>
        <fullName evidence="1">Thiamine-phosphate pyrophosphorylase</fullName>
        <shortName evidence="1">TMP pyrophosphorylase</shortName>
        <shortName evidence="1">TMP-PPase</shortName>
    </alternativeName>
</protein>
<sequence length="351" mass="40310">MLNSNTKDHEDLRIYQIIDANLDRAREGLRVLEDWARFGLGKEKYVEKIKNFRQILGKNHLEVYKQSRNQIEDNCKGLTHQEQLNRKTSEQIISSNSARVQEALRVIEEFSRLHNNELSKIASEIRYEIYTVEIDLLSFSKFKKSEKILKENDLYVITDQKDNLLEIIEEILIAGVKIIQHRFKTGTDQDHLQEAIEIKNLCKRYNSLFIVNDRLDIALASNADGIHLGQDDLDLKTTRKLFGYSKIIGISANNAIDISNALDEGCDYIGIGPVFETTTKKNKKPLGIENIKTLTKDLNIPWFAIGGIKSNNISYLKRNGFKKVALVSELMNSEDPKEDAMMILKELSHEN</sequence>
<evidence type="ECO:0000255" key="1">
    <source>
        <dbReference type="HAMAP-Rule" id="MF_01327"/>
    </source>
</evidence>
<proteinExistence type="inferred from homology"/>
<dbReference type="EC" id="2.5.1.3" evidence="1"/>
<dbReference type="EMBL" id="CP000551">
    <property type="protein sequence ID" value="ABM70756.1"/>
    <property type="molecule type" value="Genomic_DNA"/>
</dbReference>
<dbReference type="RefSeq" id="WP_011818893.1">
    <property type="nucleotide sequence ID" value="NC_008816.1"/>
</dbReference>
<dbReference type="SMR" id="A2BSJ5"/>
<dbReference type="STRING" id="146891.A9601_14731"/>
<dbReference type="KEGG" id="pmb:A9601_14731"/>
<dbReference type="eggNOG" id="COG0352">
    <property type="taxonomic scope" value="Bacteria"/>
</dbReference>
<dbReference type="HOGENOM" id="CLU_064900_0_0_3"/>
<dbReference type="OrthoDB" id="9812206at2"/>
<dbReference type="UniPathway" id="UPA00060">
    <property type="reaction ID" value="UER00141"/>
</dbReference>
<dbReference type="Proteomes" id="UP000002590">
    <property type="component" value="Chromosome"/>
</dbReference>
<dbReference type="GO" id="GO:0005737">
    <property type="term" value="C:cytoplasm"/>
    <property type="evidence" value="ECO:0007669"/>
    <property type="project" value="TreeGrafter"/>
</dbReference>
<dbReference type="GO" id="GO:0000287">
    <property type="term" value="F:magnesium ion binding"/>
    <property type="evidence" value="ECO:0007669"/>
    <property type="project" value="UniProtKB-UniRule"/>
</dbReference>
<dbReference type="GO" id="GO:0004789">
    <property type="term" value="F:thiamine-phosphate diphosphorylase activity"/>
    <property type="evidence" value="ECO:0007669"/>
    <property type="project" value="UniProtKB-UniRule"/>
</dbReference>
<dbReference type="GO" id="GO:0009228">
    <property type="term" value="P:thiamine biosynthetic process"/>
    <property type="evidence" value="ECO:0007669"/>
    <property type="project" value="UniProtKB-KW"/>
</dbReference>
<dbReference type="GO" id="GO:0009229">
    <property type="term" value="P:thiamine diphosphate biosynthetic process"/>
    <property type="evidence" value="ECO:0007669"/>
    <property type="project" value="UniProtKB-UniRule"/>
</dbReference>
<dbReference type="CDD" id="cd00564">
    <property type="entry name" value="TMP_TenI"/>
    <property type="match status" value="1"/>
</dbReference>
<dbReference type="FunFam" id="3.20.20.70:FF:000096">
    <property type="entry name" value="Thiamine-phosphate synthase"/>
    <property type="match status" value="1"/>
</dbReference>
<dbReference type="Gene3D" id="3.20.20.70">
    <property type="entry name" value="Aldolase class I"/>
    <property type="match status" value="1"/>
</dbReference>
<dbReference type="HAMAP" id="MF_00097">
    <property type="entry name" value="TMP_synthase"/>
    <property type="match status" value="1"/>
</dbReference>
<dbReference type="HAMAP" id="MF_01327">
    <property type="entry name" value="TMP_synthase_cyanobact"/>
    <property type="match status" value="1"/>
</dbReference>
<dbReference type="InterPro" id="IPR013785">
    <property type="entry name" value="Aldolase_TIM"/>
</dbReference>
<dbReference type="InterPro" id="IPR036206">
    <property type="entry name" value="ThiamineP_synth_sf"/>
</dbReference>
<dbReference type="InterPro" id="IPR022998">
    <property type="entry name" value="ThiamineP_synth_TenI"/>
</dbReference>
<dbReference type="InterPro" id="IPR041397">
    <property type="entry name" value="ThiD2"/>
</dbReference>
<dbReference type="InterPro" id="IPR034291">
    <property type="entry name" value="TMP_synthase"/>
</dbReference>
<dbReference type="InterPro" id="IPR016229">
    <property type="entry name" value="TMP_synthase_cyanobac_bac"/>
</dbReference>
<dbReference type="NCBIfam" id="NF002727">
    <property type="entry name" value="PRK02615.1"/>
    <property type="match status" value="1"/>
</dbReference>
<dbReference type="NCBIfam" id="TIGR00693">
    <property type="entry name" value="thiE"/>
    <property type="match status" value="1"/>
</dbReference>
<dbReference type="PANTHER" id="PTHR20857:SF23">
    <property type="entry name" value="THIAMINE BIOSYNTHETIC BIFUNCTIONAL ENZYME"/>
    <property type="match status" value="1"/>
</dbReference>
<dbReference type="PANTHER" id="PTHR20857">
    <property type="entry name" value="THIAMINE-PHOSPHATE PYROPHOSPHORYLASE"/>
    <property type="match status" value="1"/>
</dbReference>
<dbReference type="Pfam" id="PF17792">
    <property type="entry name" value="ThiD2"/>
    <property type="match status" value="1"/>
</dbReference>
<dbReference type="Pfam" id="PF02581">
    <property type="entry name" value="TMP-TENI"/>
    <property type="match status" value="1"/>
</dbReference>
<dbReference type="PIRSF" id="PIRSF000512">
    <property type="entry name" value="TMP_PPase_Cyanobac_prd"/>
    <property type="match status" value="1"/>
</dbReference>
<dbReference type="SUPFAM" id="SSF51391">
    <property type="entry name" value="Thiamin phosphate synthase"/>
    <property type="match status" value="1"/>
</dbReference>
<name>THIE_PROMS</name>